<reference key="1">
    <citation type="submission" date="2007-09" db="EMBL/GenBank/DDBJ databases">
        <title>Complete genome sequence of Rickettsia canadensis.</title>
        <authorList>
            <person name="Madan A."/>
            <person name="Fahey J."/>
            <person name="Helton E."/>
            <person name="Ketteman M."/>
            <person name="Madan A."/>
            <person name="Rodrigues S."/>
            <person name="Sanchez A."/>
            <person name="Whiting M."/>
            <person name="Dasch G."/>
            <person name="Eremeeva M."/>
        </authorList>
    </citation>
    <scope>NUCLEOTIDE SEQUENCE [LARGE SCALE GENOMIC DNA]</scope>
    <source>
        <strain>McKiel</strain>
    </source>
</reference>
<name>Y570_RICCK</name>
<dbReference type="EMBL" id="CP000409">
    <property type="protein sequence ID" value="ABV73062.1"/>
    <property type="molecule type" value="Genomic_DNA"/>
</dbReference>
<dbReference type="RefSeq" id="WP_012148263.1">
    <property type="nucleotide sequence ID" value="NC_009879.1"/>
</dbReference>
<dbReference type="SMR" id="A8EXH9"/>
<dbReference type="STRING" id="293613.A1E_00570"/>
<dbReference type="KEGG" id="rcm:A1E_00570"/>
<dbReference type="eggNOG" id="COG3750">
    <property type="taxonomic scope" value="Bacteria"/>
</dbReference>
<dbReference type="HOGENOM" id="CLU_158651_4_0_5"/>
<dbReference type="Proteomes" id="UP000007056">
    <property type="component" value="Chromosome"/>
</dbReference>
<dbReference type="GO" id="GO:0003677">
    <property type="term" value="F:DNA binding"/>
    <property type="evidence" value="ECO:0007669"/>
    <property type="project" value="InterPro"/>
</dbReference>
<dbReference type="HAMAP" id="MF_00797">
    <property type="entry name" value="UPF0335"/>
    <property type="match status" value="1"/>
</dbReference>
<dbReference type="InterPro" id="IPR018753">
    <property type="entry name" value="GapR-like"/>
</dbReference>
<dbReference type="InterPro" id="IPR046367">
    <property type="entry name" value="GapR-like_DNA-bd"/>
</dbReference>
<dbReference type="NCBIfam" id="NF010247">
    <property type="entry name" value="PRK13694.1"/>
    <property type="match status" value="1"/>
</dbReference>
<dbReference type="Pfam" id="PF10073">
    <property type="entry name" value="GapR_DNA-bd"/>
    <property type="match status" value="1"/>
</dbReference>
<organism>
    <name type="scientific">Rickettsia canadensis (strain McKiel)</name>
    <dbReference type="NCBI Taxonomy" id="293613"/>
    <lineage>
        <taxon>Bacteria</taxon>
        <taxon>Pseudomonadati</taxon>
        <taxon>Pseudomonadota</taxon>
        <taxon>Alphaproteobacteria</taxon>
        <taxon>Rickettsiales</taxon>
        <taxon>Rickettsiaceae</taxon>
        <taxon>Rickettsieae</taxon>
        <taxon>Rickettsia</taxon>
        <taxon>belli group</taxon>
    </lineage>
</organism>
<feature type="chain" id="PRO_1000046967" description="UPF0335 protein A1E_00570">
    <location>
        <begin position="1"/>
        <end position="78"/>
    </location>
</feature>
<evidence type="ECO:0000255" key="1">
    <source>
        <dbReference type="HAMAP-Rule" id="MF_00797"/>
    </source>
</evidence>
<comment type="similarity">
    <text evidence="1">Belongs to the UPF0335 family.</text>
</comment>
<protein>
    <recommendedName>
        <fullName evidence="1">UPF0335 protein A1E_00570</fullName>
    </recommendedName>
</protein>
<proteinExistence type="inferred from homology"/>
<accession>A8EXH9</accession>
<sequence>MSEVVVKEQLEQYISKIERLEQEKADLLEEIKNIFQDASSHGFDVKAMKSILKLKKLDKDKLAEQDAMLELYRDTLGI</sequence>
<gene>
    <name type="ordered locus">A1E_00570</name>
</gene>